<comment type="function">
    <text evidence="1">NDH-1 shuttles electrons from NADH, via FMN and iron-sulfur (Fe-S) centers, to quinones in the respiratory chain. The immediate electron acceptor for the enzyme in this species is believed to be ubiquinone. Couples the redox reaction to proton translocation (for every two electrons transferred, four hydrogen ions are translocated across the cytoplasmic membrane), and thus conserves the redox energy in a proton gradient.</text>
</comment>
<comment type="catalytic activity">
    <reaction evidence="1">
        <text>a quinone + NADH + 5 H(+)(in) = a quinol + NAD(+) + 4 H(+)(out)</text>
        <dbReference type="Rhea" id="RHEA:57888"/>
        <dbReference type="ChEBI" id="CHEBI:15378"/>
        <dbReference type="ChEBI" id="CHEBI:24646"/>
        <dbReference type="ChEBI" id="CHEBI:57540"/>
        <dbReference type="ChEBI" id="CHEBI:57945"/>
        <dbReference type="ChEBI" id="CHEBI:132124"/>
    </reaction>
</comment>
<comment type="subunit">
    <text evidence="1">NDH-1 is composed of 13 different subunits. Subunits NuoB, CD, E, F, and G constitute the peripheral sector of the complex.</text>
</comment>
<comment type="subcellular location">
    <subcellularLocation>
        <location evidence="1">Cell inner membrane</location>
        <topology evidence="1">Peripheral membrane protein</topology>
        <orientation evidence="1">Cytoplasmic side</orientation>
    </subcellularLocation>
</comment>
<comment type="similarity">
    <text evidence="1">In the N-terminal section; belongs to the complex I 30 kDa subunit family.</text>
</comment>
<comment type="similarity">
    <text evidence="1">In the C-terminal section; belongs to the complex I 49 kDa subunit family.</text>
</comment>
<feature type="chain" id="PRO_1000143687" description="NADH-quinone oxidoreductase subunit C/D">
    <location>
        <begin position="1"/>
        <end position="600"/>
    </location>
</feature>
<feature type="region of interest" description="NADH dehydrogenase I subunit C" evidence="1">
    <location>
        <begin position="1"/>
        <end position="190"/>
    </location>
</feature>
<feature type="region of interest" description="NADH dehydrogenase I subunit D" evidence="1">
    <location>
        <begin position="214"/>
        <end position="600"/>
    </location>
</feature>
<name>NUOCD_ECO8A</name>
<dbReference type="EC" id="7.1.1.-" evidence="1"/>
<dbReference type="EMBL" id="CU928160">
    <property type="protein sequence ID" value="CAQ99202.1"/>
    <property type="molecule type" value="Genomic_DNA"/>
</dbReference>
<dbReference type="RefSeq" id="WP_000247878.1">
    <property type="nucleotide sequence ID" value="NC_011741.1"/>
</dbReference>
<dbReference type="SMR" id="B7M5W5"/>
<dbReference type="GeneID" id="93774888"/>
<dbReference type="KEGG" id="ecr:ECIAI1_2360"/>
<dbReference type="HOGENOM" id="CLU_015134_3_2_6"/>
<dbReference type="GO" id="GO:0030964">
    <property type="term" value="C:NADH dehydrogenase complex"/>
    <property type="evidence" value="ECO:0007669"/>
    <property type="project" value="InterPro"/>
</dbReference>
<dbReference type="GO" id="GO:0005886">
    <property type="term" value="C:plasma membrane"/>
    <property type="evidence" value="ECO:0007669"/>
    <property type="project" value="UniProtKB-SubCell"/>
</dbReference>
<dbReference type="GO" id="GO:0051287">
    <property type="term" value="F:NAD binding"/>
    <property type="evidence" value="ECO:0007669"/>
    <property type="project" value="InterPro"/>
</dbReference>
<dbReference type="GO" id="GO:0008137">
    <property type="term" value="F:NADH dehydrogenase (ubiquinone) activity"/>
    <property type="evidence" value="ECO:0007669"/>
    <property type="project" value="InterPro"/>
</dbReference>
<dbReference type="GO" id="GO:0050136">
    <property type="term" value="F:NADH:ubiquinone reductase (non-electrogenic) activity"/>
    <property type="evidence" value="ECO:0007669"/>
    <property type="project" value="UniProtKB-UniRule"/>
</dbReference>
<dbReference type="GO" id="GO:0048038">
    <property type="term" value="F:quinone binding"/>
    <property type="evidence" value="ECO:0007669"/>
    <property type="project" value="UniProtKB-KW"/>
</dbReference>
<dbReference type="FunFam" id="1.10.645.10:FF:000001">
    <property type="entry name" value="NADH-quinone oxidoreductase subunit C/D"/>
    <property type="match status" value="1"/>
</dbReference>
<dbReference type="FunFam" id="3.30.460.80:FF:000001">
    <property type="entry name" value="NADH-quinone oxidoreductase subunit C/D"/>
    <property type="match status" value="1"/>
</dbReference>
<dbReference type="Gene3D" id="1.10.645.10">
    <property type="entry name" value="Cytochrome-c3 Hydrogenase, chain B"/>
    <property type="match status" value="1"/>
</dbReference>
<dbReference type="Gene3D" id="3.30.460.80">
    <property type="entry name" value="NADH:ubiquinone oxidoreductase, 30kDa subunit"/>
    <property type="match status" value="1"/>
</dbReference>
<dbReference type="HAMAP" id="MF_01357">
    <property type="entry name" value="NDH1_NuoC"/>
    <property type="match status" value="1"/>
</dbReference>
<dbReference type="HAMAP" id="MF_01359">
    <property type="entry name" value="NDH1_NuoCD_1"/>
    <property type="match status" value="1"/>
</dbReference>
<dbReference type="HAMAP" id="MF_01358">
    <property type="entry name" value="NDH1_NuoD"/>
    <property type="match status" value="1"/>
</dbReference>
<dbReference type="InterPro" id="IPR010218">
    <property type="entry name" value="NADH_DH_suC"/>
</dbReference>
<dbReference type="InterPro" id="IPR023062">
    <property type="entry name" value="NADH_DH_suCD"/>
</dbReference>
<dbReference type="InterPro" id="IPR001135">
    <property type="entry name" value="NADH_Q_OxRdtase_suD"/>
</dbReference>
<dbReference type="InterPro" id="IPR037232">
    <property type="entry name" value="NADH_quin_OxRdtase_su_C/D-like"/>
</dbReference>
<dbReference type="InterPro" id="IPR001268">
    <property type="entry name" value="NADH_UbQ_OxRdtase_30kDa_su"/>
</dbReference>
<dbReference type="InterPro" id="IPR014029">
    <property type="entry name" value="NADH_UbQ_OxRdtase_49kDa_CS"/>
</dbReference>
<dbReference type="InterPro" id="IPR020396">
    <property type="entry name" value="NADH_UbQ_OxRdtase_CS"/>
</dbReference>
<dbReference type="InterPro" id="IPR022885">
    <property type="entry name" value="NDH1_su_D/H"/>
</dbReference>
<dbReference type="InterPro" id="IPR029014">
    <property type="entry name" value="NiFe-Hase_large"/>
</dbReference>
<dbReference type="NCBIfam" id="TIGR01961">
    <property type="entry name" value="NuoC_fam"/>
    <property type="match status" value="1"/>
</dbReference>
<dbReference type="NCBIfam" id="TIGR01962">
    <property type="entry name" value="NuoD"/>
    <property type="match status" value="1"/>
</dbReference>
<dbReference type="NCBIfam" id="NF004739">
    <property type="entry name" value="PRK06075.1"/>
    <property type="match status" value="1"/>
</dbReference>
<dbReference type="NCBIfam" id="NF008728">
    <property type="entry name" value="PRK11742.1"/>
    <property type="match status" value="1"/>
</dbReference>
<dbReference type="PANTHER" id="PTHR11993:SF45">
    <property type="entry name" value="NADH-QUINONE OXIDOREDUCTASE SUBUNIT C_D"/>
    <property type="match status" value="1"/>
</dbReference>
<dbReference type="PANTHER" id="PTHR11993">
    <property type="entry name" value="NADH-UBIQUINONE OXIDOREDUCTASE 49 KDA SUBUNIT"/>
    <property type="match status" value="1"/>
</dbReference>
<dbReference type="Pfam" id="PF00329">
    <property type="entry name" value="Complex1_30kDa"/>
    <property type="match status" value="1"/>
</dbReference>
<dbReference type="Pfam" id="PF00346">
    <property type="entry name" value="Complex1_49kDa"/>
    <property type="match status" value="1"/>
</dbReference>
<dbReference type="SUPFAM" id="SSF56762">
    <property type="entry name" value="HydB/Nqo4-like"/>
    <property type="match status" value="1"/>
</dbReference>
<dbReference type="SUPFAM" id="SSF143243">
    <property type="entry name" value="Nqo5-like"/>
    <property type="match status" value="1"/>
</dbReference>
<dbReference type="PROSITE" id="PS00542">
    <property type="entry name" value="COMPLEX1_30K"/>
    <property type="match status" value="1"/>
</dbReference>
<dbReference type="PROSITE" id="PS00535">
    <property type="entry name" value="COMPLEX1_49K"/>
    <property type="match status" value="1"/>
</dbReference>
<accession>B7M5W5</accession>
<organism>
    <name type="scientific">Escherichia coli O8 (strain IAI1)</name>
    <dbReference type="NCBI Taxonomy" id="585034"/>
    <lineage>
        <taxon>Bacteria</taxon>
        <taxon>Pseudomonadati</taxon>
        <taxon>Pseudomonadota</taxon>
        <taxon>Gammaproteobacteria</taxon>
        <taxon>Enterobacterales</taxon>
        <taxon>Enterobacteriaceae</taxon>
        <taxon>Escherichia</taxon>
    </lineage>
</organism>
<keyword id="KW-0997">Cell inner membrane</keyword>
<keyword id="KW-1003">Cell membrane</keyword>
<keyword id="KW-0472">Membrane</keyword>
<keyword id="KW-0511">Multifunctional enzyme</keyword>
<keyword id="KW-0520">NAD</keyword>
<keyword id="KW-0874">Quinone</keyword>
<keyword id="KW-1278">Translocase</keyword>
<keyword id="KW-0813">Transport</keyword>
<keyword id="KW-0830">Ubiquinone</keyword>
<reference key="1">
    <citation type="journal article" date="2009" name="PLoS Genet.">
        <title>Organised genome dynamics in the Escherichia coli species results in highly diverse adaptive paths.</title>
        <authorList>
            <person name="Touchon M."/>
            <person name="Hoede C."/>
            <person name="Tenaillon O."/>
            <person name="Barbe V."/>
            <person name="Baeriswyl S."/>
            <person name="Bidet P."/>
            <person name="Bingen E."/>
            <person name="Bonacorsi S."/>
            <person name="Bouchier C."/>
            <person name="Bouvet O."/>
            <person name="Calteau A."/>
            <person name="Chiapello H."/>
            <person name="Clermont O."/>
            <person name="Cruveiller S."/>
            <person name="Danchin A."/>
            <person name="Diard M."/>
            <person name="Dossat C."/>
            <person name="Karoui M.E."/>
            <person name="Frapy E."/>
            <person name="Garry L."/>
            <person name="Ghigo J.M."/>
            <person name="Gilles A.M."/>
            <person name="Johnson J."/>
            <person name="Le Bouguenec C."/>
            <person name="Lescat M."/>
            <person name="Mangenot S."/>
            <person name="Martinez-Jehanne V."/>
            <person name="Matic I."/>
            <person name="Nassif X."/>
            <person name="Oztas S."/>
            <person name="Petit M.A."/>
            <person name="Pichon C."/>
            <person name="Rouy Z."/>
            <person name="Ruf C.S."/>
            <person name="Schneider D."/>
            <person name="Tourret J."/>
            <person name="Vacherie B."/>
            <person name="Vallenet D."/>
            <person name="Medigue C."/>
            <person name="Rocha E.P.C."/>
            <person name="Denamur E."/>
        </authorList>
    </citation>
    <scope>NUCLEOTIDE SEQUENCE [LARGE SCALE GENOMIC DNA]</scope>
    <source>
        <strain>IAI1</strain>
    </source>
</reference>
<gene>
    <name evidence="1" type="primary">nuoC</name>
    <name evidence="1" type="synonym">nuoCD</name>
    <name evidence="1" type="synonym">nuoD</name>
    <name type="ordered locus">ECIAI1_2360</name>
</gene>
<proteinExistence type="inferred from homology"/>
<evidence type="ECO:0000255" key="1">
    <source>
        <dbReference type="HAMAP-Rule" id="MF_01359"/>
    </source>
</evidence>
<protein>
    <recommendedName>
        <fullName evidence="1">NADH-quinone oxidoreductase subunit C/D</fullName>
        <ecNumber evidence="1">7.1.1.-</ecNumber>
    </recommendedName>
    <alternativeName>
        <fullName evidence="1">NADH dehydrogenase I subunit C/D</fullName>
    </alternativeName>
    <alternativeName>
        <fullName evidence="1">NDH-1 subunit C/D</fullName>
    </alternativeName>
</protein>
<sequence length="600" mass="68725">MVNNMTDLTAQEPAWQTRDHLDDPVIGELRNRFGPDAFTVQATRTGVPVVWIKREQLLEVGDFLKKLPKPYVMLFDLHGMDERLRTHREGLPAADFSVFYHLISIDRNRDIMLKVALAENDLHVPTFTKLFPNANWYERETWDLFGITFDGHPNLRRIMMPQTWKGHPLRKDYPARATEFSPFELTKAKQDLEMEALTFKPEEWGMKRGTENEDFMFLNLGPNHPSAHGAFRIVLQLDGEEIVDCVPDIGYHHRGAEKMGERQSWHSYIPYTDRIEYLGGCVNEMPYVLAVEKLAGITVPDRVNVIRVMLSELFRINSHLLYISTFIQDVGAMTPVFFAFTDRQKIYDLVEAITGFRMHPAWFRIGGVAHDLPRGWDRLLREFLDWMPKRLASYEKAALQNTILKGRSQGVAAYGAKEALEWGTTGAGLRATGIDFDVRKARPYSGYENFDFEIPVGGGVSDCYTRVMLKVEELRQSLRILEQCLNNMPEGPFKADHPLTTPPPKERTLQHIETLITHFLQVSWGPVMPANESFQMIEATKGINSYYLTSDGSTMSYRTRIRTPSYAHLQQIPAAIRGSLVSDLIVYLGSIDFVMSDVDR</sequence>